<feature type="chain" id="PRO_0000330151" description="NADH-cytochrome b5 reductase 1">
    <location>
        <begin position="1"/>
        <end position="294"/>
    </location>
</feature>
<feature type="transmembrane region" description="Helical" evidence="3">
    <location>
        <begin position="13"/>
        <end position="33"/>
    </location>
</feature>
<feature type="domain" description="FAD-binding FR-type" evidence="4">
    <location>
        <begin position="44"/>
        <end position="147"/>
    </location>
</feature>
<feature type="binding site" evidence="1">
    <location>
        <begin position="127"/>
        <end position="142"/>
    </location>
    <ligand>
        <name>FAD</name>
        <dbReference type="ChEBI" id="CHEBI:57692"/>
    </ligand>
</feature>
<feature type="binding site" evidence="1">
    <location>
        <begin position="153"/>
        <end position="185"/>
    </location>
    <ligand>
        <name>FAD</name>
        <dbReference type="ChEBI" id="CHEBI:57692"/>
    </ligand>
</feature>
<evidence type="ECO:0000250" key="1"/>
<evidence type="ECO:0000250" key="2">
    <source>
        <dbReference type="UniProtKB" id="P38626"/>
    </source>
</evidence>
<evidence type="ECO:0000255" key="3"/>
<evidence type="ECO:0000255" key="4">
    <source>
        <dbReference type="PROSITE-ProRule" id="PRU00716"/>
    </source>
</evidence>
<evidence type="ECO:0000305" key="5"/>
<accession>P0CP14</accession>
<accession>Q55IJ8</accession>
<accession>Q5K838</accession>
<reference key="1">
    <citation type="journal article" date="2005" name="Science">
        <title>The genome of the basidiomycetous yeast and human pathogen Cryptococcus neoformans.</title>
        <authorList>
            <person name="Loftus B.J."/>
            <person name="Fung E."/>
            <person name="Roncaglia P."/>
            <person name="Rowley D."/>
            <person name="Amedeo P."/>
            <person name="Bruno D."/>
            <person name="Vamathevan J."/>
            <person name="Miranda M."/>
            <person name="Anderson I.J."/>
            <person name="Fraser J.A."/>
            <person name="Allen J.E."/>
            <person name="Bosdet I.E."/>
            <person name="Brent M.R."/>
            <person name="Chiu R."/>
            <person name="Doering T.L."/>
            <person name="Donlin M.J."/>
            <person name="D'Souza C.A."/>
            <person name="Fox D.S."/>
            <person name="Grinberg V."/>
            <person name="Fu J."/>
            <person name="Fukushima M."/>
            <person name="Haas B.J."/>
            <person name="Huang J.C."/>
            <person name="Janbon G."/>
            <person name="Jones S.J.M."/>
            <person name="Koo H.L."/>
            <person name="Krzywinski M.I."/>
            <person name="Kwon-Chung K.J."/>
            <person name="Lengeler K.B."/>
            <person name="Maiti R."/>
            <person name="Marra M.A."/>
            <person name="Marra R.E."/>
            <person name="Mathewson C.A."/>
            <person name="Mitchell T.G."/>
            <person name="Pertea M."/>
            <person name="Riggs F.R."/>
            <person name="Salzberg S.L."/>
            <person name="Schein J.E."/>
            <person name="Shvartsbeyn A."/>
            <person name="Shin H."/>
            <person name="Shumway M."/>
            <person name="Specht C.A."/>
            <person name="Suh B.B."/>
            <person name="Tenney A."/>
            <person name="Utterback T.R."/>
            <person name="Wickes B.L."/>
            <person name="Wortman J.R."/>
            <person name="Wye N.H."/>
            <person name="Kronstad J.W."/>
            <person name="Lodge J.K."/>
            <person name="Heitman J."/>
            <person name="Davis R.W."/>
            <person name="Fraser C.M."/>
            <person name="Hyman R.W."/>
        </authorList>
    </citation>
    <scope>NUCLEOTIDE SEQUENCE [LARGE SCALE GENOMIC DNA]</scope>
    <source>
        <strain>JEC21 / ATCC MYA-565</strain>
    </source>
</reference>
<gene>
    <name type="primary">CBR1</name>
    <name type="ordered locus">CNM00240</name>
</gene>
<proteinExistence type="inferred from homology"/>
<keyword id="KW-0274">FAD</keyword>
<keyword id="KW-0285">Flavoprotein</keyword>
<keyword id="KW-0472">Membrane</keyword>
<keyword id="KW-0496">Mitochondrion</keyword>
<keyword id="KW-1000">Mitochondrion outer membrane</keyword>
<keyword id="KW-0520">NAD</keyword>
<keyword id="KW-0560">Oxidoreductase</keyword>
<keyword id="KW-1185">Reference proteome</keyword>
<keyword id="KW-0808">Transferase</keyword>
<keyword id="KW-0812">Transmembrane</keyword>
<keyword id="KW-1133">Transmembrane helix</keyword>
<comment type="function">
    <text evidence="2">NADH-dependent reductase for DPH3 and cytochrome b5. Required for the first step of diphthamide biosynthesis, a post-translational modification of histidine which occurs in elongation factor 2. DPH1 and DPH2 transfer a 3-amino-3-carboxypropyl (ACP) group from S-adenosyl-L-methionine (SAM) to a histidine residue, the reaction is assisted by a reduction system comprising DPH3 and a NADH-dependent reductase, predominantly CBR1. By reducing DPH3, also involved in the formation of the tRNA wobble base modification mcm5s 2U (5-methoxycarbonylmethyl-2-thiouridine), mediated by the elongator complex. The cytochrome b5/NADH cytochrome b5 reductase electron transfer system supports the catalytic activity of several sterol biosynthetic enzymes.</text>
</comment>
<comment type="catalytic activity">
    <reaction evidence="2">
        <text>2 Fe(III)-[cytochrome b5] + NADH = 2 Fe(II)-[cytochrome b5] + NAD(+) + H(+)</text>
        <dbReference type="Rhea" id="RHEA:46680"/>
        <dbReference type="Rhea" id="RHEA-COMP:10438"/>
        <dbReference type="Rhea" id="RHEA-COMP:10439"/>
        <dbReference type="ChEBI" id="CHEBI:15378"/>
        <dbReference type="ChEBI" id="CHEBI:29033"/>
        <dbReference type="ChEBI" id="CHEBI:29034"/>
        <dbReference type="ChEBI" id="CHEBI:57540"/>
        <dbReference type="ChEBI" id="CHEBI:57945"/>
        <dbReference type="EC" id="1.6.2.2"/>
    </reaction>
</comment>
<comment type="catalytic activity">
    <reaction evidence="2">
        <text>2 Fe(3+)-[Dph3] + NADH = 2 Fe(2+)-[Dph3] + NAD(+) + H(+)</text>
        <dbReference type="Rhea" id="RHEA:71231"/>
        <dbReference type="Rhea" id="RHEA-COMP:18002"/>
        <dbReference type="Rhea" id="RHEA-COMP:18003"/>
        <dbReference type="ChEBI" id="CHEBI:15378"/>
        <dbReference type="ChEBI" id="CHEBI:29033"/>
        <dbReference type="ChEBI" id="CHEBI:29034"/>
        <dbReference type="ChEBI" id="CHEBI:57540"/>
        <dbReference type="ChEBI" id="CHEBI:57945"/>
        <dbReference type="ChEBI" id="CHEBI:83228"/>
    </reaction>
    <physiologicalReaction direction="left-to-right" evidence="2">
        <dbReference type="Rhea" id="RHEA:71232"/>
    </physiologicalReaction>
</comment>
<comment type="cofactor">
    <cofactor evidence="3">
        <name>FAD</name>
        <dbReference type="ChEBI" id="CHEBI:57692"/>
    </cofactor>
</comment>
<comment type="pathway">
    <text evidence="2">Protein modification; peptidyl-diphthamide biosynthesis.</text>
</comment>
<comment type="subunit">
    <text evidence="2">Monomer. Component of the 2-(3-amino-3-carboxypropyl)histidine synthase complex composed of DPH1, DPH2, DPH3 and a NADH-dependent reductase, predominantly CBR1.</text>
</comment>
<comment type="subcellular location">
    <subcellularLocation>
        <location evidence="2">Mitochondrion outer membrane</location>
        <topology evidence="3">Single-pass membrane protein</topology>
    </subcellularLocation>
</comment>
<comment type="similarity">
    <text evidence="5">Belongs to the flavoprotein pyridine nucleotide cytochrome reductase family.</text>
</comment>
<dbReference type="EC" id="1.6.2.2" evidence="2"/>
<dbReference type="EMBL" id="AE017353">
    <property type="protein sequence ID" value="AAW46852.1"/>
    <property type="molecule type" value="Genomic_DNA"/>
</dbReference>
<dbReference type="RefSeq" id="XP_568369.1">
    <property type="nucleotide sequence ID" value="XM_568369.1"/>
</dbReference>
<dbReference type="SMR" id="P0CP14"/>
<dbReference type="FunCoup" id="P0CP14">
    <property type="interactions" value="140"/>
</dbReference>
<dbReference type="STRING" id="214684.P0CP14"/>
<dbReference type="PaxDb" id="214684-P0CP14"/>
<dbReference type="EnsemblFungi" id="AAW46852">
    <property type="protein sequence ID" value="AAW46852"/>
    <property type="gene ID" value="CNM00240"/>
</dbReference>
<dbReference type="GeneID" id="3255044"/>
<dbReference type="KEGG" id="cne:CNM00240"/>
<dbReference type="VEuPathDB" id="FungiDB:CNM00240"/>
<dbReference type="eggNOG" id="KOG0534">
    <property type="taxonomic scope" value="Eukaryota"/>
</dbReference>
<dbReference type="HOGENOM" id="CLU_003827_9_0_1"/>
<dbReference type="InParanoid" id="P0CP14"/>
<dbReference type="OMA" id="VQIFMCG"/>
<dbReference type="OrthoDB" id="432685at2759"/>
<dbReference type="UniPathway" id="UPA00559"/>
<dbReference type="Proteomes" id="UP000002149">
    <property type="component" value="Chromosome 13"/>
</dbReference>
<dbReference type="GO" id="GO:0005741">
    <property type="term" value="C:mitochondrial outer membrane"/>
    <property type="evidence" value="ECO:0007669"/>
    <property type="project" value="UniProtKB-SubCell"/>
</dbReference>
<dbReference type="GO" id="GO:0090560">
    <property type="term" value="F:2-(3-amino-3-carboxypropyl)histidine synthase activity"/>
    <property type="evidence" value="ECO:0007669"/>
    <property type="project" value="EnsemblFungi"/>
</dbReference>
<dbReference type="GO" id="GO:0004128">
    <property type="term" value="F:cytochrome-b5 reductase activity, acting on NAD(P)H"/>
    <property type="evidence" value="ECO:0000250"/>
    <property type="project" value="UniProtKB"/>
</dbReference>
<dbReference type="GO" id="GO:0003954">
    <property type="term" value="F:NADH dehydrogenase activity"/>
    <property type="evidence" value="ECO:0000250"/>
    <property type="project" value="UniProtKB"/>
</dbReference>
<dbReference type="GO" id="GO:0017183">
    <property type="term" value="P:protein histidyl modification to diphthamide"/>
    <property type="evidence" value="ECO:0000250"/>
    <property type="project" value="UniProtKB"/>
</dbReference>
<dbReference type="GO" id="GO:0002926">
    <property type="term" value="P:tRNA wobble base 5-methoxycarbonylmethyl-2-thiouridinylation"/>
    <property type="evidence" value="ECO:0000250"/>
    <property type="project" value="UniProtKB"/>
</dbReference>
<dbReference type="CDD" id="cd06183">
    <property type="entry name" value="cyt_b5_reduct_like"/>
    <property type="match status" value="1"/>
</dbReference>
<dbReference type="FunFam" id="2.40.30.10:FF:000032">
    <property type="entry name" value="NADH-cytochrome b5 reductase"/>
    <property type="match status" value="1"/>
</dbReference>
<dbReference type="FunFam" id="3.40.50.80:FF:000019">
    <property type="entry name" value="NADH-cytochrome b5 reductase"/>
    <property type="match status" value="1"/>
</dbReference>
<dbReference type="Gene3D" id="3.40.50.80">
    <property type="entry name" value="Nucleotide-binding domain of ferredoxin-NADP reductase (FNR) module"/>
    <property type="match status" value="1"/>
</dbReference>
<dbReference type="Gene3D" id="2.40.30.10">
    <property type="entry name" value="Translation factors"/>
    <property type="match status" value="1"/>
</dbReference>
<dbReference type="InterPro" id="IPR001834">
    <property type="entry name" value="CBR-like"/>
</dbReference>
<dbReference type="InterPro" id="IPR008333">
    <property type="entry name" value="Cbr1-like_FAD-bd_dom"/>
</dbReference>
<dbReference type="InterPro" id="IPR017927">
    <property type="entry name" value="FAD-bd_FR_type"/>
</dbReference>
<dbReference type="InterPro" id="IPR001709">
    <property type="entry name" value="Flavoprot_Pyr_Nucl_cyt_Rdtase"/>
</dbReference>
<dbReference type="InterPro" id="IPR039261">
    <property type="entry name" value="FNR_nucleotide-bd"/>
</dbReference>
<dbReference type="InterPro" id="IPR001433">
    <property type="entry name" value="OxRdtase_FAD/NAD-bd"/>
</dbReference>
<dbReference type="InterPro" id="IPR017938">
    <property type="entry name" value="Riboflavin_synthase-like_b-brl"/>
</dbReference>
<dbReference type="PANTHER" id="PTHR19370">
    <property type="entry name" value="NADH-CYTOCHROME B5 REDUCTASE"/>
    <property type="match status" value="1"/>
</dbReference>
<dbReference type="PANTHER" id="PTHR19370:SF184">
    <property type="entry name" value="NADH-CYTOCHROME B5 REDUCTASE-LIKE"/>
    <property type="match status" value="1"/>
</dbReference>
<dbReference type="Pfam" id="PF00970">
    <property type="entry name" value="FAD_binding_6"/>
    <property type="match status" value="1"/>
</dbReference>
<dbReference type="Pfam" id="PF00175">
    <property type="entry name" value="NAD_binding_1"/>
    <property type="match status" value="1"/>
</dbReference>
<dbReference type="PRINTS" id="PR00406">
    <property type="entry name" value="CYTB5RDTASE"/>
</dbReference>
<dbReference type="PRINTS" id="PR00371">
    <property type="entry name" value="FPNCR"/>
</dbReference>
<dbReference type="SUPFAM" id="SSF52343">
    <property type="entry name" value="Ferredoxin reductase-like, C-terminal NADP-linked domain"/>
    <property type="match status" value="1"/>
</dbReference>
<dbReference type="SUPFAM" id="SSF63380">
    <property type="entry name" value="Riboflavin synthase domain-like"/>
    <property type="match status" value="1"/>
</dbReference>
<dbReference type="PROSITE" id="PS51384">
    <property type="entry name" value="FAD_FR"/>
    <property type="match status" value="1"/>
</dbReference>
<sequence length="294" mass="32306">MFTIEVLAQKLAPHASFLGGLVVAAILGLFIFFQEKDRKVLDPVEWRSFKLVDKDHLSHNTALYRFALPRASDSLGLPIGQHISVAAEINGKQVVRSYTPTTLDDDKGHFDLVVKTYEKGNISRYLSLLTIGQEIKVKGPKGKFVYTPNMAPHLVMIAGGTGITPMYQIIKSSIKTPGDKTRLSLIYANIQEDDILLKKEIDELQAKSNGRFDVKYVLNNPPEGWTGGVGFVTKEMIEEAMPSSGVGSANHGEGHKVLMCGPPPMITAMKGHLAQIGYPAPRSVSKLEDQVFLF</sequence>
<organism>
    <name type="scientific">Cryptococcus neoformans var. neoformans serotype D (strain JEC21 / ATCC MYA-565)</name>
    <name type="common">Filobasidiella neoformans</name>
    <dbReference type="NCBI Taxonomy" id="214684"/>
    <lineage>
        <taxon>Eukaryota</taxon>
        <taxon>Fungi</taxon>
        <taxon>Dikarya</taxon>
        <taxon>Basidiomycota</taxon>
        <taxon>Agaricomycotina</taxon>
        <taxon>Tremellomycetes</taxon>
        <taxon>Tremellales</taxon>
        <taxon>Cryptococcaceae</taxon>
        <taxon>Cryptococcus</taxon>
        <taxon>Cryptococcus neoformans species complex</taxon>
    </lineage>
</organism>
<protein>
    <recommendedName>
        <fullName>NADH-cytochrome b5 reductase 1</fullName>
        <ecNumber evidence="2">1.6.2.2</ecNumber>
    </recommendedName>
    <alternativeName>
        <fullName>Microsomal cytochrome b reductase</fullName>
    </alternativeName>
</protein>
<name>NCB5R_CRYNJ</name>